<keyword id="KW-1185">Reference proteome</keyword>
<sequence>MDLSVKSEENVEYMVEAIKEKLRMVNAGAMRAASFNEEMYEDLRDIYDHVMKRETFSISEMQAITEELGTLIKK</sequence>
<dbReference type="EMBL" id="AE016877">
    <property type="protein sequence ID" value="AAP07489.1"/>
    <property type="molecule type" value="Genomic_DNA"/>
</dbReference>
<dbReference type="RefSeq" id="NP_830288.1">
    <property type="nucleotide sequence ID" value="NC_004722.1"/>
</dbReference>
<dbReference type="RefSeq" id="WP_000366196.1">
    <property type="nucleotide sequence ID" value="NZ_CP138336.1"/>
</dbReference>
<dbReference type="SMR" id="Q81ID9"/>
<dbReference type="STRING" id="226900.BC_0449"/>
<dbReference type="KEGG" id="bce:BC0449"/>
<dbReference type="PATRIC" id="fig|226900.8.peg.419"/>
<dbReference type="HOGENOM" id="CLU_199533_1_0_9"/>
<dbReference type="OrthoDB" id="2361695at2"/>
<dbReference type="Proteomes" id="UP000001417">
    <property type="component" value="Chromosome"/>
</dbReference>
<dbReference type="HAMAP" id="MF_00829">
    <property type="entry name" value="UPF0435"/>
    <property type="match status" value="1"/>
</dbReference>
<dbReference type="InterPro" id="IPR009507">
    <property type="entry name" value="UPF0435"/>
</dbReference>
<dbReference type="Pfam" id="PF06569">
    <property type="entry name" value="DUF1128"/>
    <property type="match status" value="1"/>
</dbReference>
<accession>Q81ID9</accession>
<organism>
    <name type="scientific">Bacillus cereus (strain ATCC 14579 / DSM 31 / CCUG 7414 / JCM 2152 / NBRC 15305 / NCIMB 9373 / NCTC 2599 / NRRL B-3711)</name>
    <dbReference type="NCBI Taxonomy" id="226900"/>
    <lineage>
        <taxon>Bacteria</taxon>
        <taxon>Bacillati</taxon>
        <taxon>Bacillota</taxon>
        <taxon>Bacilli</taxon>
        <taxon>Bacillales</taxon>
        <taxon>Bacillaceae</taxon>
        <taxon>Bacillus</taxon>
        <taxon>Bacillus cereus group</taxon>
    </lineage>
</organism>
<name>Y449_BACCR</name>
<evidence type="ECO:0000255" key="1">
    <source>
        <dbReference type="HAMAP-Rule" id="MF_00829"/>
    </source>
</evidence>
<comment type="similarity">
    <text evidence="1">Belongs to the UPF0435 family.</text>
</comment>
<gene>
    <name type="ordered locus">BC_0449</name>
</gene>
<reference key="1">
    <citation type="journal article" date="2003" name="Nature">
        <title>Genome sequence of Bacillus cereus and comparative analysis with Bacillus anthracis.</title>
        <authorList>
            <person name="Ivanova N."/>
            <person name="Sorokin A."/>
            <person name="Anderson I."/>
            <person name="Galleron N."/>
            <person name="Candelon B."/>
            <person name="Kapatral V."/>
            <person name="Bhattacharyya A."/>
            <person name="Reznik G."/>
            <person name="Mikhailova N."/>
            <person name="Lapidus A."/>
            <person name="Chu L."/>
            <person name="Mazur M."/>
            <person name="Goltsman E."/>
            <person name="Larsen N."/>
            <person name="D'Souza M."/>
            <person name="Walunas T."/>
            <person name="Grechkin Y."/>
            <person name="Pusch G."/>
            <person name="Haselkorn R."/>
            <person name="Fonstein M."/>
            <person name="Ehrlich S.D."/>
            <person name="Overbeek R."/>
            <person name="Kyrpides N.C."/>
        </authorList>
    </citation>
    <scope>NUCLEOTIDE SEQUENCE [LARGE SCALE GENOMIC DNA]</scope>
    <source>
        <strain>ATCC 14579 / DSM 31 / CCUG 7414 / JCM 2152 / NBRC 15305 / NCIMB 9373 / NCTC 2599 / NRRL B-3711</strain>
    </source>
</reference>
<proteinExistence type="inferred from homology"/>
<feature type="chain" id="PRO_0000291401" description="UPF0435 protein BC_0449">
    <location>
        <begin position="1"/>
        <end position="74"/>
    </location>
</feature>
<protein>
    <recommendedName>
        <fullName evidence="1">UPF0435 protein BC_0449</fullName>
    </recommendedName>
</protein>